<protein>
    <recommendedName>
        <fullName evidence="1">Isopentenyl-diphosphate delta-isomerase</fullName>
        <shortName evidence="1">IPP isomerase</shortName>
        <ecNumber evidence="1">5.3.3.2</ecNumber>
    </recommendedName>
    <alternativeName>
        <fullName evidence="1">Isopentenyl diphosphate:dimethylallyl diphosphate isomerase</fullName>
    </alternativeName>
    <alternativeName>
        <fullName evidence="1">Isopentenyl pyrophosphate isomerase</fullName>
    </alternativeName>
    <alternativeName>
        <fullName evidence="1">Type 2 isopentenyl diphosphate isomerase</fullName>
        <shortName evidence="1">IDI-2</shortName>
    </alternativeName>
</protein>
<organism>
    <name type="scientific">Staphylococcus aureus (strain USA300 / TCH1516)</name>
    <dbReference type="NCBI Taxonomy" id="451516"/>
    <lineage>
        <taxon>Bacteria</taxon>
        <taxon>Bacillati</taxon>
        <taxon>Bacillota</taxon>
        <taxon>Bacilli</taxon>
        <taxon>Bacillales</taxon>
        <taxon>Staphylococcaceae</taxon>
        <taxon>Staphylococcus</taxon>
    </lineage>
</organism>
<feature type="chain" id="PRO_1000079385" description="Isopentenyl-diphosphate delta-isomerase">
    <location>
        <begin position="1"/>
        <end position="349"/>
    </location>
</feature>
<feature type="binding site" evidence="1">
    <location>
        <begin position="9"/>
        <end position="10"/>
    </location>
    <ligand>
        <name>substrate</name>
    </ligand>
</feature>
<feature type="binding site" evidence="1">
    <location>
        <begin position="65"/>
        <end position="67"/>
    </location>
    <ligand>
        <name>FMN</name>
        <dbReference type="ChEBI" id="CHEBI:58210"/>
    </ligand>
</feature>
<feature type="binding site" evidence="1">
    <location>
        <begin position="95"/>
        <end position="97"/>
    </location>
    <ligand>
        <name>substrate</name>
    </ligand>
</feature>
<feature type="binding site" evidence="1">
    <location>
        <position position="95"/>
    </location>
    <ligand>
        <name>FMN</name>
        <dbReference type="ChEBI" id="CHEBI:58210"/>
    </ligand>
</feature>
<feature type="binding site" evidence="1">
    <location>
        <position position="124"/>
    </location>
    <ligand>
        <name>FMN</name>
        <dbReference type="ChEBI" id="CHEBI:58210"/>
    </ligand>
</feature>
<feature type="binding site" evidence="1">
    <location>
        <position position="154"/>
    </location>
    <ligand>
        <name>substrate</name>
    </ligand>
</feature>
<feature type="binding site" evidence="1">
    <location>
        <position position="155"/>
    </location>
    <ligand>
        <name>Mg(2+)</name>
        <dbReference type="ChEBI" id="CHEBI:18420"/>
    </ligand>
</feature>
<feature type="binding site" evidence="1">
    <location>
        <position position="186"/>
    </location>
    <ligand>
        <name>FMN</name>
        <dbReference type="ChEBI" id="CHEBI:58210"/>
    </ligand>
</feature>
<feature type="binding site" evidence="1">
    <location>
        <position position="211"/>
    </location>
    <ligand>
        <name>FMN</name>
        <dbReference type="ChEBI" id="CHEBI:58210"/>
    </ligand>
</feature>
<feature type="binding site" evidence="1">
    <location>
        <position position="216"/>
    </location>
    <ligand>
        <name>FMN</name>
        <dbReference type="ChEBI" id="CHEBI:58210"/>
    </ligand>
</feature>
<feature type="binding site" evidence="1">
    <location>
        <begin position="262"/>
        <end position="264"/>
    </location>
    <ligand>
        <name>FMN</name>
        <dbReference type="ChEBI" id="CHEBI:58210"/>
    </ligand>
</feature>
<feature type="binding site" evidence="1">
    <location>
        <begin position="283"/>
        <end position="284"/>
    </location>
    <ligand>
        <name>FMN</name>
        <dbReference type="ChEBI" id="CHEBI:58210"/>
    </ligand>
</feature>
<sequence>MSDFQREQRKNEHVEIAMAQSDAMHSDFDKMRFVHHSIPSINVNDIDLTSQTPDLTMAYPVYINAMTGGSEWTKNINEKLAVVARETGLAMAVGSTHAALRNPRMAETFTIARKMNPEGMIFSNVGADVPVEKALEAVELLEAQALQIHVNSPQELVMPEGNREFVTWLDNIASIVSRVSVPVIIKEVGFGMSKELMHDLQQIGVKYVDVSGKGGTNFVDIENERRANKDMDYLSSWGQSTVESLLETTAYQSEISVFASGGLRTPLDAIKSLALGAKATGMSRPFLNQVENNGIAHTVAYVESFIEHMKSIMTMLDAKNIDDLTQKQIVFSPEILSWIEQRNLNIHRG</sequence>
<accession>A8Z536</accession>
<reference key="1">
    <citation type="journal article" date="2007" name="BMC Microbiol.">
        <title>Subtle genetic changes enhance virulence of methicillin resistant and sensitive Staphylococcus aureus.</title>
        <authorList>
            <person name="Highlander S.K."/>
            <person name="Hulten K.G."/>
            <person name="Qin X."/>
            <person name="Jiang H."/>
            <person name="Yerrapragada S."/>
            <person name="Mason E.O. Jr."/>
            <person name="Shang Y."/>
            <person name="Williams T.M."/>
            <person name="Fortunov R.M."/>
            <person name="Liu Y."/>
            <person name="Igboeli O."/>
            <person name="Petrosino J."/>
            <person name="Tirumalai M."/>
            <person name="Uzman A."/>
            <person name="Fox G.E."/>
            <person name="Cardenas A.M."/>
            <person name="Muzny D.M."/>
            <person name="Hemphill L."/>
            <person name="Ding Y."/>
            <person name="Dugan S."/>
            <person name="Blyth P.R."/>
            <person name="Buhay C.J."/>
            <person name="Dinh H.H."/>
            <person name="Hawes A.C."/>
            <person name="Holder M."/>
            <person name="Kovar C.L."/>
            <person name="Lee S.L."/>
            <person name="Liu W."/>
            <person name="Nazareth L.V."/>
            <person name="Wang Q."/>
            <person name="Zhou J."/>
            <person name="Kaplan S.L."/>
            <person name="Weinstock G.M."/>
        </authorList>
    </citation>
    <scope>NUCLEOTIDE SEQUENCE [LARGE SCALE GENOMIC DNA]</scope>
    <source>
        <strain>USA300 / TCH1516</strain>
    </source>
</reference>
<dbReference type="EC" id="5.3.3.2" evidence="1"/>
<dbReference type="EMBL" id="CP000730">
    <property type="protein sequence ID" value="ABX30319.1"/>
    <property type="molecule type" value="Genomic_DNA"/>
</dbReference>
<dbReference type="RefSeq" id="WP_001279381.1">
    <property type="nucleotide sequence ID" value="NC_010079.1"/>
</dbReference>
<dbReference type="SMR" id="A8Z536"/>
<dbReference type="KEGG" id="sax:USA300HOU_2327"/>
<dbReference type="HOGENOM" id="CLU_065515_0_0_9"/>
<dbReference type="GO" id="GO:0005737">
    <property type="term" value="C:cytoplasm"/>
    <property type="evidence" value="ECO:0007669"/>
    <property type="project" value="UniProtKB-SubCell"/>
</dbReference>
<dbReference type="GO" id="GO:0010181">
    <property type="term" value="F:FMN binding"/>
    <property type="evidence" value="ECO:0007669"/>
    <property type="project" value="UniProtKB-UniRule"/>
</dbReference>
<dbReference type="GO" id="GO:0004452">
    <property type="term" value="F:isopentenyl-diphosphate delta-isomerase activity"/>
    <property type="evidence" value="ECO:0007669"/>
    <property type="project" value="UniProtKB-UniRule"/>
</dbReference>
<dbReference type="GO" id="GO:0000287">
    <property type="term" value="F:magnesium ion binding"/>
    <property type="evidence" value="ECO:0007669"/>
    <property type="project" value="UniProtKB-UniRule"/>
</dbReference>
<dbReference type="GO" id="GO:0070402">
    <property type="term" value="F:NADPH binding"/>
    <property type="evidence" value="ECO:0007669"/>
    <property type="project" value="UniProtKB-UniRule"/>
</dbReference>
<dbReference type="GO" id="GO:0016491">
    <property type="term" value="F:oxidoreductase activity"/>
    <property type="evidence" value="ECO:0007669"/>
    <property type="project" value="InterPro"/>
</dbReference>
<dbReference type="GO" id="GO:0008299">
    <property type="term" value="P:isoprenoid biosynthetic process"/>
    <property type="evidence" value="ECO:0007669"/>
    <property type="project" value="UniProtKB-UniRule"/>
</dbReference>
<dbReference type="CDD" id="cd02811">
    <property type="entry name" value="IDI-2_FMN"/>
    <property type="match status" value="1"/>
</dbReference>
<dbReference type="Gene3D" id="3.20.20.70">
    <property type="entry name" value="Aldolase class I"/>
    <property type="match status" value="1"/>
</dbReference>
<dbReference type="HAMAP" id="MF_00354">
    <property type="entry name" value="Idi_2"/>
    <property type="match status" value="1"/>
</dbReference>
<dbReference type="InterPro" id="IPR013785">
    <property type="entry name" value="Aldolase_TIM"/>
</dbReference>
<dbReference type="InterPro" id="IPR000262">
    <property type="entry name" value="FMN-dep_DH"/>
</dbReference>
<dbReference type="InterPro" id="IPR011179">
    <property type="entry name" value="IPdP_isomerase"/>
</dbReference>
<dbReference type="NCBIfam" id="TIGR02151">
    <property type="entry name" value="IPP_isom_2"/>
    <property type="match status" value="1"/>
</dbReference>
<dbReference type="PANTHER" id="PTHR43665">
    <property type="entry name" value="ISOPENTENYL-DIPHOSPHATE DELTA-ISOMERASE"/>
    <property type="match status" value="1"/>
</dbReference>
<dbReference type="PANTHER" id="PTHR43665:SF1">
    <property type="entry name" value="ISOPENTENYL-DIPHOSPHATE DELTA-ISOMERASE"/>
    <property type="match status" value="1"/>
</dbReference>
<dbReference type="Pfam" id="PF01070">
    <property type="entry name" value="FMN_dh"/>
    <property type="match status" value="1"/>
</dbReference>
<dbReference type="PIRSF" id="PIRSF003314">
    <property type="entry name" value="IPP_isomerase"/>
    <property type="match status" value="1"/>
</dbReference>
<dbReference type="SUPFAM" id="SSF51395">
    <property type="entry name" value="FMN-linked oxidoreductases"/>
    <property type="match status" value="1"/>
</dbReference>
<comment type="function">
    <text evidence="1">Involved in the biosynthesis of isoprenoids. Catalyzes the 1,3-allylic rearrangement of the homoallylic substrate isopentenyl (IPP) to its allylic isomer, dimethylallyl diphosphate (DMAPP).</text>
</comment>
<comment type="catalytic activity">
    <reaction evidence="1">
        <text>isopentenyl diphosphate = dimethylallyl diphosphate</text>
        <dbReference type="Rhea" id="RHEA:23284"/>
        <dbReference type="ChEBI" id="CHEBI:57623"/>
        <dbReference type="ChEBI" id="CHEBI:128769"/>
        <dbReference type="EC" id="5.3.3.2"/>
    </reaction>
</comment>
<comment type="cofactor">
    <cofactor evidence="1">
        <name>FMN</name>
        <dbReference type="ChEBI" id="CHEBI:58210"/>
    </cofactor>
</comment>
<comment type="cofactor">
    <cofactor evidence="1">
        <name>NADPH</name>
        <dbReference type="ChEBI" id="CHEBI:57783"/>
    </cofactor>
</comment>
<comment type="cofactor">
    <cofactor evidence="1">
        <name>Mg(2+)</name>
        <dbReference type="ChEBI" id="CHEBI:18420"/>
    </cofactor>
</comment>
<comment type="subunit">
    <text evidence="1">Homooctamer. Dimer of tetramers.</text>
</comment>
<comment type="subcellular location">
    <subcellularLocation>
        <location evidence="1">Cytoplasm</location>
    </subcellularLocation>
</comment>
<comment type="similarity">
    <text evidence="1">Belongs to the IPP isomerase type 2 family.</text>
</comment>
<keyword id="KW-0963">Cytoplasm</keyword>
<keyword id="KW-0285">Flavoprotein</keyword>
<keyword id="KW-0288">FMN</keyword>
<keyword id="KW-0413">Isomerase</keyword>
<keyword id="KW-0414">Isoprene biosynthesis</keyword>
<keyword id="KW-0460">Magnesium</keyword>
<keyword id="KW-0479">Metal-binding</keyword>
<keyword id="KW-0521">NADP</keyword>
<gene>
    <name evidence="1" type="primary">fni</name>
    <name type="ordered locus">USA300HOU_2327</name>
</gene>
<proteinExistence type="inferred from homology"/>
<evidence type="ECO:0000255" key="1">
    <source>
        <dbReference type="HAMAP-Rule" id="MF_00354"/>
    </source>
</evidence>
<name>IDI2_STAAT</name>